<dbReference type="EC" id="2.4.2.1" evidence="1"/>
<dbReference type="EC" id="2.4.2.2" evidence="1"/>
<dbReference type="EMBL" id="CP001390">
    <property type="protein sequence ID" value="ACM21335.1"/>
    <property type="molecule type" value="Genomic_DNA"/>
</dbReference>
<dbReference type="RefSeq" id="WP_012648063.1">
    <property type="nucleotide sequence ID" value="NC_011979.1"/>
</dbReference>
<dbReference type="SMR" id="B9M2Y9"/>
<dbReference type="STRING" id="316067.Geob_2992"/>
<dbReference type="KEGG" id="geo:Geob_2992"/>
<dbReference type="eggNOG" id="COG3123">
    <property type="taxonomic scope" value="Bacteria"/>
</dbReference>
<dbReference type="HOGENOM" id="CLU_157874_1_0_7"/>
<dbReference type="OrthoDB" id="9793848at2"/>
<dbReference type="Proteomes" id="UP000007721">
    <property type="component" value="Chromosome"/>
</dbReference>
<dbReference type="GO" id="GO:0005829">
    <property type="term" value="C:cytosol"/>
    <property type="evidence" value="ECO:0007669"/>
    <property type="project" value="TreeGrafter"/>
</dbReference>
<dbReference type="GO" id="GO:0047975">
    <property type="term" value="F:guanosine phosphorylase activity"/>
    <property type="evidence" value="ECO:0007669"/>
    <property type="project" value="UniProtKB-EC"/>
</dbReference>
<dbReference type="GO" id="GO:0004731">
    <property type="term" value="F:purine-nucleoside phosphorylase activity"/>
    <property type="evidence" value="ECO:0007669"/>
    <property type="project" value="UniProtKB-UniRule"/>
</dbReference>
<dbReference type="GO" id="GO:0009032">
    <property type="term" value="F:thymidine phosphorylase activity"/>
    <property type="evidence" value="ECO:0007669"/>
    <property type="project" value="UniProtKB-EC"/>
</dbReference>
<dbReference type="GO" id="GO:0004850">
    <property type="term" value="F:uridine phosphorylase activity"/>
    <property type="evidence" value="ECO:0007669"/>
    <property type="project" value="UniProtKB-EC"/>
</dbReference>
<dbReference type="CDD" id="cd20296">
    <property type="entry name" value="cupin_PpnP-like"/>
    <property type="match status" value="1"/>
</dbReference>
<dbReference type="Gene3D" id="2.60.120.10">
    <property type="entry name" value="Jelly Rolls"/>
    <property type="match status" value="1"/>
</dbReference>
<dbReference type="HAMAP" id="MF_01537">
    <property type="entry name" value="Nucleos_phosphorylase_PpnP"/>
    <property type="match status" value="1"/>
</dbReference>
<dbReference type="InterPro" id="IPR009664">
    <property type="entry name" value="Ppnp"/>
</dbReference>
<dbReference type="InterPro" id="IPR014710">
    <property type="entry name" value="RmlC-like_jellyroll"/>
</dbReference>
<dbReference type="InterPro" id="IPR011051">
    <property type="entry name" value="RmlC_Cupin_sf"/>
</dbReference>
<dbReference type="PANTHER" id="PTHR36540">
    <property type="entry name" value="PYRIMIDINE/PURINE NUCLEOSIDE PHOSPHORYLASE"/>
    <property type="match status" value="1"/>
</dbReference>
<dbReference type="PANTHER" id="PTHR36540:SF1">
    <property type="entry name" value="PYRIMIDINE_PURINE NUCLEOSIDE PHOSPHORYLASE"/>
    <property type="match status" value="1"/>
</dbReference>
<dbReference type="Pfam" id="PF06865">
    <property type="entry name" value="Ppnp"/>
    <property type="match status" value="1"/>
</dbReference>
<dbReference type="SUPFAM" id="SSF51182">
    <property type="entry name" value="RmlC-like cupins"/>
    <property type="match status" value="1"/>
</dbReference>
<reference key="1">
    <citation type="submission" date="2009-01" db="EMBL/GenBank/DDBJ databases">
        <title>Complete sequence of Geobacter sp. FRC-32.</title>
        <authorList>
            <consortium name="US DOE Joint Genome Institute"/>
            <person name="Lucas S."/>
            <person name="Copeland A."/>
            <person name="Lapidus A."/>
            <person name="Glavina del Rio T."/>
            <person name="Dalin E."/>
            <person name="Tice H."/>
            <person name="Bruce D."/>
            <person name="Goodwin L."/>
            <person name="Pitluck S."/>
            <person name="Saunders E."/>
            <person name="Brettin T."/>
            <person name="Detter J.C."/>
            <person name="Han C."/>
            <person name="Larimer F."/>
            <person name="Land M."/>
            <person name="Hauser L."/>
            <person name="Kyrpides N."/>
            <person name="Ovchinnikova G."/>
            <person name="Kostka J."/>
            <person name="Richardson P."/>
        </authorList>
    </citation>
    <scope>NUCLEOTIDE SEQUENCE [LARGE SCALE GENOMIC DNA]</scope>
    <source>
        <strain>DSM 22248 / JCM 15807 / FRC-32</strain>
    </source>
</reference>
<feature type="chain" id="PRO_1000185196" description="Pyrimidine/purine nucleoside phosphorylase">
    <location>
        <begin position="1"/>
        <end position="104"/>
    </location>
</feature>
<sequence>MSEFSNVTVVKEANIFFDGGVTSRTIIFSSGSKKTLGIMMPGEYVFNTAGAELMEILSGDLEVQIAGIDSWKPVKGGESFEVPASSSFRMKVKTVTDYCCSFLA</sequence>
<protein>
    <recommendedName>
        <fullName evidence="1">Pyrimidine/purine nucleoside phosphorylase</fullName>
        <ecNumber evidence="1">2.4.2.1</ecNumber>
        <ecNumber evidence="1">2.4.2.2</ecNumber>
    </recommendedName>
    <alternativeName>
        <fullName evidence="1">Adenosine phosphorylase</fullName>
    </alternativeName>
    <alternativeName>
        <fullName evidence="1">Cytidine phosphorylase</fullName>
    </alternativeName>
    <alternativeName>
        <fullName evidence="1">Guanosine phosphorylase</fullName>
    </alternativeName>
    <alternativeName>
        <fullName evidence="1">Inosine phosphorylase</fullName>
    </alternativeName>
    <alternativeName>
        <fullName evidence="1">Thymidine phosphorylase</fullName>
    </alternativeName>
    <alternativeName>
        <fullName evidence="1">Uridine phosphorylase</fullName>
    </alternativeName>
    <alternativeName>
        <fullName evidence="1">Xanthosine phosphorylase</fullName>
    </alternativeName>
</protein>
<comment type="function">
    <text evidence="1">Catalyzes the phosphorolysis of diverse nucleosides, yielding D-ribose 1-phosphate and the respective free bases. Can use uridine, adenosine, guanosine, cytidine, thymidine, inosine and xanthosine as substrates. Also catalyzes the reverse reactions.</text>
</comment>
<comment type="catalytic activity">
    <reaction evidence="1">
        <text>a purine D-ribonucleoside + phosphate = a purine nucleobase + alpha-D-ribose 1-phosphate</text>
        <dbReference type="Rhea" id="RHEA:19805"/>
        <dbReference type="ChEBI" id="CHEBI:26386"/>
        <dbReference type="ChEBI" id="CHEBI:43474"/>
        <dbReference type="ChEBI" id="CHEBI:57720"/>
        <dbReference type="ChEBI" id="CHEBI:142355"/>
        <dbReference type="EC" id="2.4.2.1"/>
    </reaction>
</comment>
<comment type="catalytic activity">
    <reaction evidence="1">
        <text>adenosine + phosphate = alpha-D-ribose 1-phosphate + adenine</text>
        <dbReference type="Rhea" id="RHEA:27642"/>
        <dbReference type="ChEBI" id="CHEBI:16335"/>
        <dbReference type="ChEBI" id="CHEBI:16708"/>
        <dbReference type="ChEBI" id="CHEBI:43474"/>
        <dbReference type="ChEBI" id="CHEBI:57720"/>
        <dbReference type="EC" id="2.4.2.1"/>
    </reaction>
</comment>
<comment type="catalytic activity">
    <reaction evidence="1">
        <text>cytidine + phosphate = cytosine + alpha-D-ribose 1-phosphate</text>
        <dbReference type="Rhea" id="RHEA:52540"/>
        <dbReference type="ChEBI" id="CHEBI:16040"/>
        <dbReference type="ChEBI" id="CHEBI:17562"/>
        <dbReference type="ChEBI" id="CHEBI:43474"/>
        <dbReference type="ChEBI" id="CHEBI:57720"/>
        <dbReference type="EC" id="2.4.2.2"/>
    </reaction>
</comment>
<comment type="catalytic activity">
    <reaction evidence="1">
        <text>guanosine + phosphate = alpha-D-ribose 1-phosphate + guanine</text>
        <dbReference type="Rhea" id="RHEA:13233"/>
        <dbReference type="ChEBI" id="CHEBI:16235"/>
        <dbReference type="ChEBI" id="CHEBI:16750"/>
        <dbReference type="ChEBI" id="CHEBI:43474"/>
        <dbReference type="ChEBI" id="CHEBI:57720"/>
        <dbReference type="EC" id="2.4.2.1"/>
    </reaction>
</comment>
<comment type="catalytic activity">
    <reaction evidence="1">
        <text>inosine + phosphate = alpha-D-ribose 1-phosphate + hypoxanthine</text>
        <dbReference type="Rhea" id="RHEA:27646"/>
        <dbReference type="ChEBI" id="CHEBI:17368"/>
        <dbReference type="ChEBI" id="CHEBI:17596"/>
        <dbReference type="ChEBI" id="CHEBI:43474"/>
        <dbReference type="ChEBI" id="CHEBI:57720"/>
        <dbReference type="EC" id="2.4.2.1"/>
    </reaction>
</comment>
<comment type="catalytic activity">
    <reaction evidence="1">
        <text>thymidine + phosphate = 2-deoxy-alpha-D-ribose 1-phosphate + thymine</text>
        <dbReference type="Rhea" id="RHEA:16037"/>
        <dbReference type="ChEBI" id="CHEBI:17748"/>
        <dbReference type="ChEBI" id="CHEBI:17821"/>
        <dbReference type="ChEBI" id="CHEBI:43474"/>
        <dbReference type="ChEBI" id="CHEBI:57259"/>
        <dbReference type="EC" id="2.4.2.2"/>
    </reaction>
</comment>
<comment type="catalytic activity">
    <reaction evidence="1">
        <text>uridine + phosphate = alpha-D-ribose 1-phosphate + uracil</text>
        <dbReference type="Rhea" id="RHEA:24388"/>
        <dbReference type="ChEBI" id="CHEBI:16704"/>
        <dbReference type="ChEBI" id="CHEBI:17568"/>
        <dbReference type="ChEBI" id="CHEBI:43474"/>
        <dbReference type="ChEBI" id="CHEBI:57720"/>
        <dbReference type="EC" id="2.4.2.2"/>
    </reaction>
</comment>
<comment type="catalytic activity">
    <reaction evidence="1">
        <text>xanthosine + phosphate = alpha-D-ribose 1-phosphate + xanthine</text>
        <dbReference type="Rhea" id="RHEA:27638"/>
        <dbReference type="ChEBI" id="CHEBI:17712"/>
        <dbReference type="ChEBI" id="CHEBI:18107"/>
        <dbReference type="ChEBI" id="CHEBI:43474"/>
        <dbReference type="ChEBI" id="CHEBI:57720"/>
        <dbReference type="EC" id="2.4.2.1"/>
    </reaction>
</comment>
<comment type="similarity">
    <text evidence="1">Belongs to the nucleoside phosphorylase PpnP family.</text>
</comment>
<keyword id="KW-0328">Glycosyltransferase</keyword>
<keyword id="KW-1185">Reference proteome</keyword>
<keyword id="KW-0808">Transferase</keyword>
<evidence type="ECO:0000255" key="1">
    <source>
        <dbReference type="HAMAP-Rule" id="MF_01537"/>
    </source>
</evidence>
<proteinExistence type="inferred from homology"/>
<name>PPNP_GEODF</name>
<organism>
    <name type="scientific">Geotalea daltonii (strain DSM 22248 / JCM 15807 / FRC-32)</name>
    <name type="common">Geobacter daltonii</name>
    <dbReference type="NCBI Taxonomy" id="316067"/>
    <lineage>
        <taxon>Bacteria</taxon>
        <taxon>Pseudomonadati</taxon>
        <taxon>Thermodesulfobacteriota</taxon>
        <taxon>Desulfuromonadia</taxon>
        <taxon>Geobacterales</taxon>
        <taxon>Geobacteraceae</taxon>
        <taxon>Geotalea</taxon>
    </lineage>
</organism>
<gene>
    <name evidence="1" type="primary">ppnP</name>
    <name type="ordered locus">Geob_2992</name>
</gene>
<accession>B9M2Y9</accession>